<reference key="1">
    <citation type="journal article" date="2007" name="Biochimie">
        <title>Two novel dermonecrotic toxins LiRecDT4 and LiRecDT5 from Brown spider (Loxosceles intermedia) venom: from cloning to functional characterization.</title>
        <authorList>
            <person name="da Silveira R.B."/>
            <person name="Pigozzo R.B."/>
            <person name="Chaim O.M."/>
            <person name="Appel M.H."/>
            <person name="Silva D.T."/>
            <person name="Dreyfuss J.L."/>
            <person name="Toma L."/>
            <person name="Dietrich C.P."/>
            <person name="Nader H.B."/>
            <person name="Veiga S.S."/>
            <person name="Gremski W."/>
        </authorList>
    </citation>
    <scope>NUCLEOTIDE SEQUENCE [MRNA]</scope>
    <scope>FUNCTION</scope>
    <scope>BIOASSAY</scope>
    <scope>CATALYTIC ACTIVITY</scope>
    <source>
        <tissue>Venom gland</tissue>
    </source>
</reference>
<reference key="2">
    <citation type="journal article" date="2011" name="J. Cell. Biochem.">
        <title>The relationship between calcium and the metabolism of plasma membrane phospholipids in hemolysis induced by brown spider venom phospholipase-D toxin.</title>
        <authorList>
            <person name="Chaves-Moreira D."/>
            <person name="Souza F.N."/>
            <person name="Fogaca R.T."/>
            <person name="Mangili O.C."/>
            <person name="Gremski W."/>
            <person name="Senff-Ribeiro A."/>
            <person name="Chaim O.M."/>
            <person name="Veiga S.S."/>
        </authorList>
    </citation>
    <scope>FUNCTION</scope>
</reference>
<evidence type="ECO:0000250" key="1"/>
<evidence type="ECO:0000250" key="2">
    <source>
        <dbReference type="UniProtKB" id="A0A0D4WTV1"/>
    </source>
</evidence>
<evidence type="ECO:0000250" key="3">
    <source>
        <dbReference type="UniProtKB" id="A0A0D4WV12"/>
    </source>
</evidence>
<evidence type="ECO:0000250" key="4">
    <source>
        <dbReference type="UniProtKB" id="P0CE80"/>
    </source>
</evidence>
<evidence type="ECO:0000250" key="5">
    <source>
        <dbReference type="UniProtKB" id="Q4ZFU2"/>
    </source>
</evidence>
<evidence type="ECO:0000250" key="6">
    <source>
        <dbReference type="UniProtKB" id="Q8I914"/>
    </source>
</evidence>
<evidence type="ECO:0000255" key="7"/>
<evidence type="ECO:0000269" key="8">
    <source>
    </source>
</evidence>
<evidence type="ECO:0000269" key="9">
    <source>
    </source>
</evidence>
<evidence type="ECO:0000303" key="10">
    <source>
    </source>
</evidence>
<evidence type="ECO:0000303" key="11">
    <source>
    </source>
</evidence>
<evidence type="ECO:0000305" key="12"/>
<evidence type="ECO:0000305" key="13">
    <source>
    </source>
</evidence>
<accession>Q1W694</accession>
<protein>
    <recommendedName>
        <fullName>Dermonecrotic toxin LiSicTox-betaID1</fullName>
        <ecNumber evidence="5">4.6.1.-</ecNumber>
    </recommendedName>
    <alternativeName>
        <fullName>Dermonecrotic toxin 5</fullName>
        <shortName evidence="11">DT5</shortName>
    </alternativeName>
    <alternativeName>
        <fullName evidence="10 11">LiRecDT5</fullName>
    </alternativeName>
    <alternativeName>
        <fullName>Phospholipase D</fullName>
        <shortName>PLD</shortName>
    </alternativeName>
    <alternativeName>
        <fullName>Sphingomyelin phosphodiesterase D 5</fullName>
        <shortName>SMD 5</shortName>
        <shortName>SMase D 5</shortName>
        <shortName>Sphingomyelinase D 5</shortName>
    </alternativeName>
</protein>
<comment type="function">
    <text evidence="2 8 9">Dermonecrotic toxins cleave the phosphodiester linkage between the phosphate and headgroup of certain phospholipids (sphingolipid and lysolipid substrates), forming an alcohol (often choline) and a cyclic phosphate (By similarity). This toxin acts on sphingomyelin (SM) with low activity (PubMed:17296256). It may also act on ceramide phosphoethanolamine (CPE), lysophosphatidylcholine (LPC) and lysophosphatidylethanolamine (LPE), but not on lysophosphatidylserine (LPS), and lysophosphatidylglycerol (LPG) (By similarity). It acts by transphosphatidylation, releasing exclusively cyclic phosphate products as second products (By similarity). Has no or weak activities in inducing dermonecrosis, hemolysis, inflammatory response, platelet aggregation and increase in vessel permeability (PubMed:17296256, PubMed:21590705). In vivo, shows no lethality when injected at higher dose into mice (PubMed:17296256).</text>
</comment>
<comment type="catalytic activity">
    <reaction evidence="2">
        <text>an N-(acyl)-sphingosylphosphocholine = an N-(acyl)-sphingosyl-1,3-cyclic phosphate + choline</text>
        <dbReference type="Rhea" id="RHEA:60652"/>
        <dbReference type="ChEBI" id="CHEBI:15354"/>
        <dbReference type="ChEBI" id="CHEBI:64583"/>
        <dbReference type="ChEBI" id="CHEBI:143892"/>
    </reaction>
</comment>
<comment type="catalytic activity">
    <reaction evidence="2">
        <text>an N-(acyl)-sphingosylphosphoethanolamine = an N-(acyl)-sphingosyl-1,3-cyclic phosphate + ethanolamine</text>
        <dbReference type="Rhea" id="RHEA:60648"/>
        <dbReference type="ChEBI" id="CHEBI:57603"/>
        <dbReference type="ChEBI" id="CHEBI:143891"/>
        <dbReference type="ChEBI" id="CHEBI:143892"/>
    </reaction>
</comment>
<comment type="catalytic activity">
    <reaction evidence="2">
        <text>a 1-acyl-sn-glycero-3-phosphocholine = a 1-acyl-sn-glycero-2,3-cyclic phosphate + choline</text>
        <dbReference type="Rhea" id="RHEA:60700"/>
        <dbReference type="ChEBI" id="CHEBI:15354"/>
        <dbReference type="ChEBI" id="CHEBI:58168"/>
        <dbReference type="ChEBI" id="CHEBI:143947"/>
    </reaction>
</comment>
<comment type="catalytic activity">
    <reaction evidence="2">
        <text>a 1-acyl-sn-glycero-3-phosphoethanolamine = a 1-acyl-sn-glycero-2,3-cyclic phosphate + ethanolamine</text>
        <dbReference type="Rhea" id="RHEA:60704"/>
        <dbReference type="ChEBI" id="CHEBI:57603"/>
        <dbReference type="ChEBI" id="CHEBI:64381"/>
        <dbReference type="ChEBI" id="CHEBI:143947"/>
    </reaction>
</comment>
<comment type="cofactor">
    <cofactor evidence="6">
        <name>Mg(2+)</name>
        <dbReference type="ChEBI" id="CHEBI:18420"/>
    </cofactor>
    <text evidence="6">Binds 1 Mg(2+) ion per subunit.</text>
</comment>
<comment type="subcellular location">
    <subcellularLocation>
        <location evidence="13">Secreted</location>
    </subcellularLocation>
</comment>
<comment type="tissue specificity">
    <text evidence="13">Expressed by the venom gland.</text>
</comment>
<comment type="similarity">
    <text evidence="12">Belongs to the arthropod phospholipase D family. Class II subfamily. Class IIb sub-subfamily.</text>
</comment>
<comment type="caution">
    <text evidence="2 3 5">The most common activity assay for dermonecrotic toxins detects enzymatic activity by monitoring choline release from substrate. Liberation of choline from sphingomyelin (SM) or lysophosphatidylcholine (LPC) is commonly assumed to result from substrate hydrolysis, giving either ceramide-1-phosphate (C1P) or lysophosphatidic acid (LPA), respectively, as a second product. However, two studies from Lajoie and colleagues (2013 and 2015) report the observation of exclusive formation of cyclic phosphate products as second products, resulting from intramolecular transphosphatidylation. Cyclic phosphates have vastly different biological properties from their monoester counterparts, and they may be relevant to the pathology of brown spider envenomation.</text>
</comment>
<dbReference type="EC" id="4.6.1.-" evidence="5"/>
<dbReference type="EMBL" id="DQ431849">
    <property type="protein sequence ID" value="ABD91847.1"/>
    <property type="molecule type" value="mRNA"/>
</dbReference>
<dbReference type="SMR" id="Q1W694"/>
<dbReference type="ArachnoServer" id="AS000145">
    <property type="toxin name" value="Sphingomyelinase D (LiSicTox-betaID1)"/>
</dbReference>
<dbReference type="GO" id="GO:0005576">
    <property type="term" value="C:extracellular region"/>
    <property type="evidence" value="ECO:0000303"/>
    <property type="project" value="UniProtKB"/>
</dbReference>
<dbReference type="GO" id="GO:0016829">
    <property type="term" value="F:lyase activity"/>
    <property type="evidence" value="ECO:0007669"/>
    <property type="project" value="UniProtKB-KW"/>
</dbReference>
<dbReference type="GO" id="GO:0046872">
    <property type="term" value="F:metal ion binding"/>
    <property type="evidence" value="ECO:0007669"/>
    <property type="project" value="UniProtKB-KW"/>
</dbReference>
<dbReference type="GO" id="GO:0004620">
    <property type="term" value="F:phospholipase activity"/>
    <property type="evidence" value="ECO:0000314"/>
    <property type="project" value="UniProtKB"/>
</dbReference>
<dbReference type="GO" id="GO:0008081">
    <property type="term" value="F:phosphoric diester hydrolase activity"/>
    <property type="evidence" value="ECO:0007669"/>
    <property type="project" value="InterPro"/>
</dbReference>
<dbReference type="GO" id="GO:0090729">
    <property type="term" value="F:toxin activity"/>
    <property type="evidence" value="ECO:0000314"/>
    <property type="project" value="UniProtKB"/>
</dbReference>
<dbReference type="GO" id="GO:0031640">
    <property type="term" value="P:killing of cells of another organism"/>
    <property type="evidence" value="ECO:0007669"/>
    <property type="project" value="UniProtKB-KW"/>
</dbReference>
<dbReference type="GO" id="GO:0016042">
    <property type="term" value="P:lipid catabolic process"/>
    <property type="evidence" value="ECO:0007669"/>
    <property type="project" value="UniProtKB-KW"/>
</dbReference>
<dbReference type="GO" id="GO:0006644">
    <property type="term" value="P:phospholipid metabolic process"/>
    <property type="evidence" value="ECO:0000314"/>
    <property type="project" value="UniProtKB"/>
</dbReference>
<dbReference type="GO" id="GO:0044398">
    <property type="term" value="P:venom-mediated edema in another organism"/>
    <property type="evidence" value="ECO:0000314"/>
    <property type="project" value="UniProtKB"/>
</dbReference>
<dbReference type="CDD" id="cd08576">
    <property type="entry name" value="GDPD_like_SMaseD_PLD"/>
    <property type="match status" value="1"/>
</dbReference>
<dbReference type="FunFam" id="3.20.20.190:FF:000096">
    <property type="entry name" value="Phospholipase D LiSicTox-betaID1"/>
    <property type="match status" value="1"/>
</dbReference>
<dbReference type="Gene3D" id="3.20.20.190">
    <property type="entry name" value="Phosphatidylinositol (PI) phosphodiesterase"/>
    <property type="match status" value="1"/>
</dbReference>
<dbReference type="InterPro" id="IPR017946">
    <property type="entry name" value="PLC-like_Pdiesterase_TIM-brl"/>
</dbReference>
<dbReference type="SUPFAM" id="SSF51695">
    <property type="entry name" value="PLC-like phosphodiesterases"/>
    <property type="match status" value="1"/>
</dbReference>
<sequence>MQLFIILCLAGSAVQLEGTELDGVERADNRRPIWNIAHMVNDKGLIDEYLDDGANSVESDVSFDSNGKPEKMLHGSPCDCGRSCKRQMSFADYLDYMRQLTTPGDPKFRENLILVMLDLKLKKLSSEQAYSAGQEVASQMLDKYWKRGESGARAYIVLSIPTITRVTFVNGFYDKLHSEGFDQYREKVGVDFSGNEDLEDTGKILKSRDILDHIWQSDGITNCLFRIMKRLKAAIRKRDSNGYMVKVYTWSVDKYTTMRKALRAGADGMITNFPKRLVSVLNEREFSGKFRLATYNDNPWERYTG</sequence>
<feature type="signal peptide" evidence="7">
    <location>
        <begin position="1"/>
        <end position="18"/>
    </location>
</feature>
<feature type="propeptide" id="PRO_0000279569" evidence="1">
    <location>
        <begin position="19"/>
        <end position="26"/>
    </location>
</feature>
<feature type="chain" id="PRO_0000279570" description="Dermonecrotic toxin LiSicTox-betaID1">
    <location>
        <begin position="27"/>
        <end position="305"/>
    </location>
</feature>
<feature type="active site" evidence="6">
    <location>
        <position position="38"/>
    </location>
</feature>
<feature type="active site" description="Nucleophile" evidence="6">
    <location>
        <position position="74"/>
    </location>
</feature>
<feature type="binding site" evidence="6">
    <location>
        <position position="58"/>
    </location>
    <ligand>
        <name>Mg(2+)</name>
        <dbReference type="ChEBI" id="CHEBI:18420"/>
    </ligand>
</feature>
<feature type="binding site" evidence="6">
    <location>
        <position position="60"/>
    </location>
    <ligand>
        <name>Mg(2+)</name>
        <dbReference type="ChEBI" id="CHEBI:18420"/>
    </ligand>
</feature>
<feature type="binding site" evidence="6">
    <location>
        <position position="118"/>
    </location>
    <ligand>
        <name>Mg(2+)</name>
        <dbReference type="ChEBI" id="CHEBI:18420"/>
    </ligand>
</feature>
<feature type="disulfide bond" evidence="4">
    <location>
        <begin position="78"/>
        <end position="84"/>
    </location>
</feature>
<feature type="disulfide bond" evidence="4">
    <location>
        <begin position="80"/>
        <end position="223"/>
    </location>
</feature>
<organism>
    <name type="scientific">Loxosceles intermedia</name>
    <name type="common">Brown spider</name>
    <dbReference type="NCBI Taxonomy" id="58218"/>
    <lineage>
        <taxon>Eukaryota</taxon>
        <taxon>Metazoa</taxon>
        <taxon>Ecdysozoa</taxon>
        <taxon>Arthropoda</taxon>
        <taxon>Chelicerata</taxon>
        <taxon>Arachnida</taxon>
        <taxon>Araneae</taxon>
        <taxon>Araneomorphae</taxon>
        <taxon>Haplogynae</taxon>
        <taxon>Scytodoidea</taxon>
        <taxon>Sicariidae</taxon>
        <taxon>Loxosceles</taxon>
    </lineage>
</organism>
<name>B1Q_LOXIN</name>
<keyword id="KW-0204">Cytolysis</keyword>
<keyword id="KW-1061">Dermonecrotic toxin</keyword>
<keyword id="KW-1015">Disulfide bond</keyword>
<keyword id="KW-0354">Hemolysis</keyword>
<keyword id="KW-0442">Lipid degradation</keyword>
<keyword id="KW-0443">Lipid metabolism</keyword>
<keyword id="KW-0456">Lyase</keyword>
<keyword id="KW-0460">Magnesium</keyword>
<keyword id="KW-0479">Metal-binding</keyword>
<keyword id="KW-0964">Secreted</keyword>
<keyword id="KW-0732">Signal</keyword>
<keyword id="KW-0800">Toxin</keyword>
<keyword id="KW-0865">Zymogen</keyword>
<proteinExistence type="evidence at protein level"/>